<proteinExistence type="evidence at protein level"/>
<gene>
    <name type="primary">SUVH6</name>
    <name type="synonym">SDG23</name>
    <name type="synonym">SET23</name>
    <name type="ordered locus">At2g22740</name>
    <name type="ORF">T9I22.18</name>
</gene>
<sequence>MEMGVMENLMVHTEISKVKSQSNGEVEKRGVSVLENGGVCKLDRMSGLKFKRRKVFAVRDFPPGCGSRAMEVKIACENGNVVEDVKVVESLVKEEESLGQRDASENVSDIRMAEPVEVQPLRICLPGGDVVRDLSVTAGDECSNSEQIVAGSGVSSSSGTENIVRDIVVYADESSLGMDNLDQTQPLEIEMSDVAVAKPRLVAGRKKAKKGIACHSSLKVVSREFGEGSRKKKSKKNLYWRDRESLDSPEQLRILGVGTSSGSSSGDSSRNKVKETLRLFHGVCRKILQEDEAKPEDQRRKGKGLRIDFEASTILKRNGKFLNSGVHILGEVPGVEVGDEFQYRMELNILGIHKPSQAGIDYMKYGKAKVATSIVASGGYDDHLDNSDVLTYTGQGGNVMQVKKKGEELKEPEDQKLITGNLALATSIEKQTPVRVIRGKHKSTHDKSKGGNYVYDGLYLVEKYWQQVGSHGMNVFKFQLRRIPGQPELSWVEVKKSKSKYREGLCKLDISEGKEQSPISAVNEIDDEKPPLFTYTVKLIYPDWCRPVPPKSCCCTTRCTEAEARVCACVEKNGGEIPYNFDGAIVGAKPTIYECGPLCKCPSSCYLRVTQHGIKLPLEIFKTKSRGWGVRCLKSIPIGSFICEYVGELLEDSEAERRIGNDEYLFDIGNRYDNSLAQGMSELMLGTQAGRSMAEGDESSGFTIDAASKGNVGRFINHSCSPNLYAQNVLYDHEDSRIPHVMFFAQDNIPPLQELCYDYNYALDQVRDSKGNIKQKPCFCGAAVCRRRLY</sequence>
<keyword id="KW-0002">3D-structure</keyword>
<keyword id="KW-0137">Centromere</keyword>
<keyword id="KW-0156">Chromatin regulator</keyword>
<keyword id="KW-0158">Chromosome</keyword>
<keyword id="KW-0479">Metal-binding</keyword>
<keyword id="KW-0489">Methyltransferase</keyword>
<keyword id="KW-0539">Nucleus</keyword>
<keyword id="KW-1185">Reference proteome</keyword>
<keyword id="KW-0949">S-adenosyl-L-methionine</keyword>
<keyword id="KW-0808">Transferase</keyword>
<keyword id="KW-0862">Zinc</keyword>
<feature type="chain" id="PRO_0000186077" description="Histone-lysine N-methyltransferase, H3 lysine-9 specific SUVH6">
    <location>
        <begin position="1"/>
        <end position="790"/>
    </location>
</feature>
<feature type="domain" description="YDG" evidence="5">
    <location>
        <begin position="330"/>
        <end position="482"/>
    </location>
</feature>
<feature type="domain" description="Pre-SET" evidence="3">
    <location>
        <begin position="551"/>
        <end position="613"/>
    </location>
</feature>
<feature type="domain" description="SET" evidence="4">
    <location>
        <begin position="616"/>
        <end position="760"/>
    </location>
</feature>
<feature type="domain" description="Post-SET" evidence="2">
    <location>
        <begin position="774"/>
        <end position="790"/>
    </location>
</feature>
<feature type="region of interest" description="Disordered" evidence="7">
    <location>
        <begin position="251"/>
        <end position="271"/>
    </location>
</feature>
<feature type="compositionally biased region" description="Low complexity" evidence="7">
    <location>
        <begin position="256"/>
        <end position="268"/>
    </location>
</feature>
<feature type="binding site" evidence="1">
    <location>
        <position position="553"/>
    </location>
    <ligand>
        <name>Zn(2+)</name>
        <dbReference type="ChEBI" id="CHEBI:29105"/>
        <label>1</label>
    </ligand>
</feature>
<feature type="binding site" evidence="1">
    <location>
        <position position="553"/>
    </location>
    <ligand>
        <name>Zn(2+)</name>
        <dbReference type="ChEBI" id="CHEBI:29105"/>
        <label>2</label>
    </ligand>
</feature>
<feature type="binding site" evidence="1">
    <location>
        <position position="554"/>
    </location>
    <ligand>
        <name>Zn(2+)</name>
        <dbReference type="ChEBI" id="CHEBI:29105"/>
        <label>1</label>
    </ligand>
</feature>
<feature type="binding site" evidence="1">
    <location>
        <position position="554"/>
    </location>
    <ligand>
        <name>Zn(2+)</name>
        <dbReference type="ChEBI" id="CHEBI:29105"/>
        <label>2</label>
    </ligand>
</feature>
<feature type="binding site" evidence="1">
    <location>
        <position position="555"/>
    </location>
    <ligand>
        <name>Zn(2+)</name>
        <dbReference type="ChEBI" id="CHEBI:29105"/>
        <label>1</label>
    </ligand>
</feature>
<feature type="binding site" evidence="1">
    <location>
        <position position="559"/>
    </location>
    <ligand>
        <name>Zn(2+)</name>
        <dbReference type="ChEBI" id="CHEBI:29105"/>
        <label>1</label>
    </ligand>
</feature>
<feature type="binding site" evidence="1">
    <location>
        <position position="559"/>
    </location>
    <ligand>
        <name>Zn(2+)</name>
        <dbReference type="ChEBI" id="CHEBI:29105"/>
        <label>3</label>
    </ligand>
</feature>
<feature type="binding site" evidence="1">
    <location>
        <position position="567"/>
    </location>
    <ligand>
        <name>Zn(2+)</name>
        <dbReference type="ChEBI" id="CHEBI:29105"/>
        <label>1</label>
    </ligand>
</feature>
<feature type="binding site" evidence="1">
    <location>
        <position position="569"/>
    </location>
    <ligand>
        <name>Zn(2+)</name>
        <dbReference type="ChEBI" id="CHEBI:29105"/>
        <label>2</label>
    </ligand>
</feature>
<feature type="binding site" evidence="1">
    <location>
        <position position="595"/>
    </location>
    <ligand>
        <name>Zn(2+)</name>
        <dbReference type="ChEBI" id="CHEBI:29105"/>
        <label>2</label>
    </ligand>
</feature>
<feature type="binding site" evidence="1">
    <location>
        <position position="595"/>
    </location>
    <ligand>
        <name>Zn(2+)</name>
        <dbReference type="ChEBI" id="CHEBI:29105"/>
        <label>3</label>
    </ligand>
</feature>
<feature type="binding site" evidence="1">
    <location>
        <position position="599"/>
    </location>
    <ligand>
        <name>Zn(2+)</name>
        <dbReference type="ChEBI" id="CHEBI:29105"/>
        <label>2</label>
    </ligand>
</feature>
<feature type="binding site" evidence="1">
    <location>
        <position position="601"/>
    </location>
    <ligand>
        <name>Zn(2+)</name>
        <dbReference type="ChEBI" id="CHEBI:29105"/>
        <label>3</label>
    </ligand>
</feature>
<feature type="binding site" evidence="1">
    <location>
        <position position="605"/>
    </location>
    <ligand>
        <name>Zn(2+)</name>
        <dbReference type="ChEBI" id="CHEBI:29105"/>
        <label>3</label>
    </ligand>
</feature>
<feature type="binding site" evidence="1">
    <location>
        <begin position="626"/>
        <end position="628"/>
    </location>
    <ligand>
        <name>S-adenosyl-L-methionine</name>
        <dbReference type="ChEBI" id="CHEBI:59789"/>
    </ligand>
</feature>
<feature type="binding site" evidence="4">
    <location>
        <position position="662"/>
    </location>
    <ligand>
        <name>S-adenosyl-L-methionine</name>
        <dbReference type="ChEBI" id="CHEBI:59789"/>
    </ligand>
</feature>
<feature type="binding site" evidence="4">
    <location>
        <position position="664"/>
    </location>
    <ligand>
        <name>S-adenosyl-L-methionine</name>
        <dbReference type="ChEBI" id="CHEBI:59789"/>
    </ligand>
</feature>
<feature type="binding site" evidence="4">
    <location>
        <position position="714"/>
    </location>
    <ligand>
        <name>S-adenosyl-L-methionine</name>
        <dbReference type="ChEBI" id="CHEBI:59789"/>
    </ligand>
</feature>
<feature type="binding site" evidence="1">
    <location>
        <begin position="717"/>
        <end position="718"/>
    </location>
    <ligand>
        <name>S-adenosyl-L-methionine</name>
        <dbReference type="ChEBI" id="CHEBI:59789"/>
    </ligand>
</feature>
<feature type="binding site" evidence="1">
    <location>
        <position position="720"/>
    </location>
    <ligand>
        <name>Zn(2+)</name>
        <dbReference type="ChEBI" id="CHEBI:29105"/>
        <label>4</label>
    </ligand>
</feature>
<feature type="binding site" evidence="1">
    <location>
        <position position="778"/>
    </location>
    <ligand>
        <name>Zn(2+)</name>
        <dbReference type="ChEBI" id="CHEBI:29105"/>
        <label>4</label>
    </ligand>
</feature>
<feature type="binding site" evidence="1">
    <location>
        <position position="780"/>
    </location>
    <ligand>
        <name>Zn(2+)</name>
        <dbReference type="ChEBI" id="CHEBI:29105"/>
        <label>4</label>
    </ligand>
</feature>
<feature type="binding site" evidence="1">
    <location>
        <position position="785"/>
    </location>
    <ligand>
        <name>Zn(2+)</name>
        <dbReference type="ChEBI" id="CHEBI:29105"/>
        <label>4</label>
    </ligand>
</feature>
<feature type="sequence conflict" description="In Ref. 4; AAL38815." evidence="10" ref="4">
    <original>N</original>
    <variation>D</variation>
    <location>
        <position position="386"/>
    </location>
</feature>
<feature type="helix" evidence="13">
    <location>
        <begin position="268"/>
        <end position="292"/>
    </location>
</feature>
<feature type="helix" evidence="14">
    <location>
        <begin position="296"/>
        <end position="298"/>
    </location>
</feature>
<feature type="turn" evidence="13">
    <location>
        <begin position="301"/>
        <end position="304"/>
    </location>
</feature>
<feature type="helix" evidence="13">
    <location>
        <begin position="307"/>
        <end position="317"/>
    </location>
</feature>
<feature type="strand" evidence="13">
    <location>
        <begin position="340"/>
        <end position="343"/>
    </location>
</feature>
<feature type="helix" evidence="13">
    <location>
        <begin position="344"/>
        <end position="349"/>
    </location>
</feature>
<feature type="strand" evidence="13">
    <location>
        <begin position="359"/>
        <end position="365"/>
    </location>
</feature>
<feature type="strand" evidence="13">
    <location>
        <begin position="368"/>
        <end position="376"/>
    </location>
</feature>
<feature type="strand" evidence="15">
    <location>
        <begin position="378"/>
        <end position="380"/>
    </location>
</feature>
<feature type="helix" evidence="14">
    <location>
        <begin position="384"/>
        <end position="386"/>
    </location>
</feature>
<feature type="strand" evidence="13">
    <location>
        <begin position="389"/>
        <end position="393"/>
    </location>
</feature>
<feature type="helix" evidence="13">
    <location>
        <begin position="419"/>
        <end position="430"/>
    </location>
</feature>
<feature type="strand" evidence="13">
    <location>
        <begin position="434"/>
        <end position="439"/>
    </location>
</feature>
<feature type="strand" evidence="13">
    <location>
        <begin position="453"/>
        <end position="468"/>
    </location>
</feature>
<feature type="strand" evidence="13">
    <location>
        <begin position="474"/>
        <end position="482"/>
    </location>
</feature>
<feature type="helix" evidence="13">
    <location>
        <begin position="490"/>
        <end position="497"/>
    </location>
</feature>
<feature type="strand" evidence="13">
    <location>
        <begin position="505"/>
        <end position="508"/>
    </location>
</feature>
<feature type="turn" evidence="13">
    <location>
        <begin position="510"/>
        <end position="513"/>
    </location>
</feature>
<feature type="strand" evidence="13">
    <location>
        <begin position="514"/>
        <end position="517"/>
    </location>
</feature>
<feature type="strand" evidence="13">
    <location>
        <begin position="520"/>
        <end position="522"/>
    </location>
</feature>
<feature type="strand" evidence="13">
    <location>
        <begin position="524"/>
        <end position="527"/>
    </location>
</feature>
<feature type="helix" evidence="13">
    <location>
        <begin position="543"/>
        <end position="545"/>
    </location>
</feature>
<feature type="strand" evidence="14">
    <location>
        <begin position="561"/>
        <end position="563"/>
    </location>
</feature>
<feature type="helix" evidence="13">
    <location>
        <begin position="568"/>
        <end position="572"/>
    </location>
</feature>
<feature type="strand" evidence="13">
    <location>
        <begin position="585"/>
        <end position="587"/>
    </location>
</feature>
<feature type="strand" evidence="13">
    <location>
        <begin position="590"/>
        <end position="593"/>
    </location>
</feature>
<feature type="helix" evidence="13">
    <location>
        <begin position="610"/>
        <end position="612"/>
    </location>
</feature>
<feature type="strand" evidence="13">
    <location>
        <begin position="618"/>
        <end position="622"/>
    </location>
</feature>
<feature type="strand" evidence="13">
    <location>
        <begin position="624"/>
        <end position="626"/>
    </location>
</feature>
<feature type="strand" evidence="13">
    <location>
        <begin position="628"/>
        <end position="634"/>
    </location>
</feature>
<feature type="strand" evidence="13">
    <location>
        <begin position="641"/>
        <end position="644"/>
    </location>
</feature>
<feature type="strand" evidence="13">
    <location>
        <begin position="647"/>
        <end position="651"/>
    </location>
</feature>
<feature type="helix" evidence="13">
    <location>
        <begin position="652"/>
        <end position="657"/>
    </location>
</feature>
<feature type="strand" evidence="13">
    <location>
        <begin position="658"/>
        <end position="660"/>
    </location>
</feature>
<feature type="helix" evidence="13">
    <location>
        <begin position="662"/>
        <end position="664"/>
    </location>
</feature>
<feature type="strand" evidence="13">
    <location>
        <begin position="665"/>
        <end position="669"/>
    </location>
</feature>
<feature type="helix" evidence="13">
    <location>
        <begin position="675"/>
        <end position="683"/>
    </location>
</feature>
<feature type="strand" evidence="13">
    <location>
        <begin position="699"/>
        <end position="705"/>
    </location>
</feature>
<feature type="strand" evidence="13">
    <location>
        <begin position="707"/>
        <end position="710"/>
    </location>
</feature>
<feature type="helix" evidence="13">
    <location>
        <begin position="712"/>
        <end position="715"/>
    </location>
</feature>
<feature type="strand" evidence="13">
    <location>
        <begin position="723"/>
        <end position="732"/>
    </location>
</feature>
<feature type="strand" evidence="13">
    <location>
        <begin position="740"/>
        <end position="747"/>
    </location>
</feature>
<feature type="strand" evidence="13">
    <location>
        <begin position="754"/>
        <end position="757"/>
    </location>
</feature>
<feature type="strand" evidence="15">
    <location>
        <begin position="763"/>
        <end position="767"/>
    </location>
</feature>
<feature type="strand" evidence="14">
    <location>
        <begin position="769"/>
        <end position="773"/>
    </location>
</feature>
<feature type="strand" evidence="13">
    <location>
        <begin position="787"/>
        <end position="790"/>
    </location>
</feature>
<dbReference type="EC" id="2.1.1.-" evidence="11 12"/>
<dbReference type="EC" id="2.1.1.367" evidence="11 12"/>
<dbReference type="EMBL" id="AF344449">
    <property type="protein sequence ID" value="AAK28971.1"/>
    <property type="molecule type" value="Genomic_DNA"/>
</dbReference>
<dbReference type="EMBL" id="AC006340">
    <property type="protein sequence ID" value="AAD15582.1"/>
    <property type="status" value="ALT_INIT"/>
    <property type="molecule type" value="Genomic_DNA"/>
</dbReference>
<dbReference type="EMBL" id="CP002685">
    <property type="protein sequence ID" value="AEC07347.1"/>
    <property type="molecule type" value="Genomic_DNA"/>
</dbReference>
<dbReference type="EMBL" id="CP002685">
    <property type="protein sequence ID" value="AEC07348.1"/>
    <property type="molecule type" value="Genomic_DNA"/>
</dbReference>
<dbReference type="EMBL" id="AY065374">
    <property type="protein sequence ID" value="AAL38815.1"/>
    <property type="molecule type" value="mRNA"/>
</dbReference>
<dbReference type="EMBL" id="BT002751">
    <property type="protein sequence ID" value="AAO22580.1"/>
    <property type="molecule type" value="mRNA"/>
</dbReference>
<dbReference type="PIR" id="C84616">
    <property type="entry name" value="C84616"/>
</dbReference>
<dbReference type="RefSeq" id="NP_850030.1">
    <property type="nucleotide sequence ID" value="NM_179699.3"/>
</dbReference>
<dbReference type="RefSeq" id="NP_973514.1">
    <property type="nucleotide sequence ID" value="NM_201785.1"/>
</dbReference>
<dbReference type="PDB" id="6A5K">
    <property type="method" value="X-ray"/>
    <property type="resolution" value="1.90 A"/>
    <property type="chains" value="A=264-790"/>
</dbReference>
<dbReference type="PDB" id="6A5M">
    <property type="method" value="X-ray"/>
    <property type="resolution" value="2.30 A"/>
    <property type="chains" value="A=264-790"/>
</dbReference>
<dbReference type="PDB" id="6A5N">
    <property type="method" value="X-ray"/>
    <property type="resolution" value="2.40 A"/>
    <property type="chains" value="A=264-790"/>
</dbReference>
<dbReference type="PDBsum" id="6A5K"/>
<dbReference type="PDBsum" id="6A5M"/>
<dbReference type="PDBsum" id="6A5N"/>
<dbReference type="SMR" id="Q8VZ17"/>
<dbReference type="BioGRID" id="2157">
    <property type="interactions" value="2"/>
</dbReference>
<dbReference type="DIP" id="DIP-62061N"/>
<dbReference type="FunCoup" id="Q8VZ17">
    <property type="interactions" value="44"/>
</dbReference>
<dbReference type="IntAct" id="Q8VZ17">
    <property type="interactions" value="5"/>
</dbReference>
<dbReference type="STRING" id="3702.Q8VZ17"/>
<dbReference type="PaxDb" id="3702-AT2G22740.1"/>
<dbReference type="ProteomicsDB" id="226522"/>
<dbReference type="EnsemblPlants" id="AT2G22740.1">
    <property type="protein sequence ID" value="AT2G22740.1"/>
    <property type="gene ID" value="AT2G22740"/>
</dbReference>
<dbReference type="EnsemblPlants" id="AT2G22740.2">
    <property type="protein sequence ID" value="AT2G22740.2"/>
    <property type="gene ID" value="AT2G22740"/>
</dbReference>
<dbReference type="GeneID" id="816804"/>
<dbReference type="Gramene" id="AT2G22740.1">
    <property type="protein sequence ID" value="AT2G22740.1"/>
    <property type="gene ID" value="AT2G22740"/>
</dbReference>
<dbReference type="Gramene" id="AT2G22740.2">
    <property type="protein sequence ID" value="AT2G22740.2"/>
    <property type="gene ID" value="AT2G22740"/>
</dbReference>
<dbReference type="KEGG" id="ath:AT2G22740"/>
<dbReference type="Araport" id="AT2G22740"/>
<dbReference type="TAIR" id="AT2G22740">
    <property type="gene designation" value="SUVH6"/>
</dbReference>
<dbReference type="eggNOG" id="KOG1082">
    <property type="taxonomic scope" value="Eukaryota"/>
</dbReference>
<dbReference type="HOGENOM" id="CLU_004556_0_0_1"/>
<dbReference type="InParanoid" id="Q8VZ17"/>
<dbReference type="OMA" id="ILCGCDC"/>
<dbReference type="PhylomeDB" id="Q8VZ17"/>
<dbReference type="PRO" id="PR:Q8VZ17"/>
<dbReference type="Proteomes" id="UP000006548">
    <property type="component" value="Chromosome 2"/>
</dbReference>
<dbReference type="ExpressionAtlas" id="Q8VZ17">
    <property type="expression patterns" value="baseline and differential"/>
</dbReference>
<dbReference type="GO" id="GO:0000775">
    <property type="term" value="C:chromosome, centromeric region"/>
    <property type="evidence" value="ECO:0007669"/>
    <property type="project" value="UniProtKB-SubCell"/>
</dbReference>
<dbReference type="GO" id="GO:0005634">
    <property type="term" value="C:nucleus"/>
    <property type="evidence" value="ECO:0007669"/>
    <property type="project" value="UniProtKB-SubCell"/>
</dbReference>
<dbReference type="GO" id="GO:0140947">
    <property type="term" value="F:histone H3K9me2 methyltransferase activity"/>
    <property type="evidence" value="ECO:0007669"/>
    <property type="project" value="RHEA"/>
</dbReference>
<dbReference type="GO" id="GO:0008327">
    <property type="term" value="F:methyl-CpG binding"/>
    <property type="evidence" value="ECO:0000314"/>
    <property type="project" value="TAIR"/>
</dbReference>
<dbReference type="GO" id="GO:0010428">
    <property type="term" value="F:methyl-CpNpG binding"/>
    <property type="evidence" value="ECO:0000314"/>
    <property type="project" value="TAIR"/>
</dbReference>
<dbReference type="GO" id="GO:0010429">
    <property type="term" value="F:methyl-CpNpN binding"/>
    <property type="evidence" value="ECO:0000314"/>
    <property type="project" value="TAIR"/>
</dbReference>
<dbReference type="GO" id="GO:0008168">
    <property type="term" value="F:methyltransferase activity"/>
    <property type="evidence" value="ECO:0000314"/>
    <property type="project" value="TAIR"/>
</dbReference>
<dbReference type="GO" id="GO:0008270">
    <property type="term" value="F:zinc ion binding"/>
    <property type="evidence" value="ECO:0007669"/>
    <property type="project" value="InterPro"/>
</dbReference>
<dbReference type="GO" id="GO:0032259">
    <property type="term" value="P:methylation"/>
    <property type="evidence" value="ECO:0007669"/>
    <property type="project" value="UniProtKB-KW"/>
</dbReference>
<dbReference type="CDD" id="cd10545">
    <property type="entry name" value="SET_AtSUVH-like"/>
    <property type="match status" value="1"/>
</dbReference>
<dbReference type="FunFam" id="2.30.280.10:FF:000003">
    <property type="entry name" value="Histone-lysine N-methyltransferase, H3 lysine-9 specific SUVH5"/>
    <property type="match status" value="1"/>
</dbReference>
<dbReference type="FunFam" id="2.170.270.10:FF:000051">
    <property type="entry name" value="Histone-lysine N-methyltransferase, H3 lysine-9 specific SUVH6"/>
    <property type="match status" value="1"/>
</dbReference>
<dbReference type="Gene3D" id="2.170.270.10">
    <property type="entry name" value="SET domain"/>
    <property type="match status" value="1"/>
</dbReference>
<dbReference type="Gene3D" id="2.30.280.10">
    <property type="entry name" value="SRA-YDG"/>
    <property type="match status" value="1"/>
</dbReference>
<dbReference type="InterPro" id="IPR025794">
    <property type="entry name" value="H3-K9-MeTrfase_plant"/>
</dbReference>
<dbReference type="InterPro" id="IPR051357">
    <property type="entry name" value="H3K9_HMTase_SUVAR3-9"/>
</dbReference>
<dbReference type="InterPro" id="IPR003616">
    <property type="entry name" value="Post-SET_dom"/>
</dbReference>
<dbReference type="InterPro" id="IPR007728">
    <property type="entry name" value="Pre-SET_dom"/>
</dbReference>
<dbReference type="InterPro" id="IPR015947">
    <property type="entry name" value="PUA-like_sf"/>
</dbReference>
<dbReference type="InterPro" id="IPR001214">
    <property type="entry name" value="SET_dom"/>
</dbReference>
<dbReference type="InterPro" id="IPR046341">
    <property type="entry name" value="SET_dom_sf"/>
</dbReference>
<dbReference type="InterPro" id="IPR036987">
    <property type="entry name" value="SRA-YDG_sf"/>
</dbReference>
<dbReference type="InterPro" id="IPR003105">
    <property type="entry name" value="SRA_YDG"/>
</dbReference>
<dbReference type="PANTHER" id="PTHR45660">
    <property type="entry name" value="HISTONE-LYSINE N-METHYLTRANSFERASE SETMAR"/>
    <property type="match status" value="1"/>
</dbReference>
<dbReference type="PANTHER" id="PTHR45660:SF46">
    <property type="entry name" value="HISTONE-LYSINE N-METHYLTRANSFERASE, H3 LYSINE-9 SPECIFIC SUVH6"/>
    <property type="match status" value="1"/>
</dbReference>
<dbReference type="Pfam" id="PF05033">
    <property type="entry name" value="Pre-SET"/>
    <property type="match status" value="1"/>
</dbReference>
<dbReference type="Pfam" id="PF02182">
    <property type="entry name" value="SAD_SRA"/>
    <property type="match status" value="1"/>
</dbReference>
<dbReference type="Pfam" id="PF00856">
    <property type="entry name" value="SET"/>
    <property type="match status" value="1"/>
</dbReference>
<dbReference type="SMART" id="SM00508">
    <property type="entry name" value="PostSET"/>
    <property type="match status" value="1"/>
</dbReference>
<dbReference type="SMART" id="SM00468">
    <property type="entry name" value="PreSET"/>
    <property type="match status" value="1"/>
</dbReference>
<dbReference type="SMART" id="SM00317">
    <property type="entry name" value="SET"/>
    <property type="match status" value="1"/>
</dbReference>
<dbReference type="SMART" id="SM00466">
    <property type="entry name" value="SRA"/>
    <property type="match status" value="1"/>
</dbReference>
<dbReference type="SUPFAM" id="SSF88697">
    <property type="entry name" value="PUA domain-like"/>
    <property type="match status" value="1"/>
</dbReference>
<dbReference type="SUPFAM" id="SSF82199">
    <property type="entry name" value="SET domain"/>
    <property type="match status" value="1"/>
</dbReference>
<dbReference type="PROSITE" id="PS50868">
    <property type="entry name" value="POST_SET"/>
    <property type="match status" value="1"/>
</dbReference>
<dbReference type="PROSITE" id="PS50867">
    <property type="entry name" value="PRE_SET"/>
    <property type="match status" value="1"/>
</dbReference>
<dbReference type="PROSITE" id="PS51575">
    <property type="entry name" value="SAM_MT43_SUVAR39_2"/>
    <property type="match status" value="1"/>
</dbReference>
<dbReference type="PROSITE" id="PS50280">
    <property type="entry name" value="SET"/>
    <property type="match status" value="1"/>
</dbReference>
<dbReference type="PROSITE" id="PS51015">
    <property type="entry name" value="YDG"/>
    <property type="match status" value="1"/>
</dbReference>
<name>SUVH6_ARATH</name>
<reference key="1">
    <citation type="journal article" date="2001" name="Nucleic Acids Res.">
        <title>The Arabidopsis thaliana genome contains at least 29 active genes encoding SET domain proteins that can be assigned to four evolutionarily conserved classes.</title>
        <authorList>
            <person name="Baumbusch L.O."/>
            <person name="Thorstensen T."/>
            <person name="Krauss V."/>
            <person name="Fischer A."/>
            <person name="Naumann K."/>
            <person name="Assalkhou R."/>
            <person name="Schulz I."/>
            <person name="Reuter G."/>
            <person name="Aalen R.B."/>
        </authorList>
    </citation>
    <scope>NUCLEOTIDE SEQUENCE [GENOMIC DNA]</scope>
    <scope>NOMENCLATURE</scope>
</reference>
<reference key="2">
    <citation type="journal article" date="1999" name="Nature">
        <title>Sequence and analysis of chromosome 2 of the plant Arabidopsis thaliana.</title>
        <authorList>
            <person name="Lin X."/>
            <person name="Kaul S."/>
            <person name="Rounsley S.D."/>
            <person name="Shea T.P."/>
            <person name="Benito M.-I."/>
            <person name="Town C.D."/>
            <person name="Fujii C.Y."/>
            <person name="Mason T.M."/>
            <person name="Bowman C.L."/>
            <person name="Barnstead M.E."/>
            <person name="Feldblyum T.V."/>
            <person name="Buell C.R."/>
            <person name="Ketchum K.A."/>
            <person name="Lee J.J."/>
            <person name="Ronning C.M."/>
            <person name="Koo H.L."/>
            <person name="Moffat K.S."/>
            <person name="Cronin L.A."/>
            <person name="Shen M."/>
            <person name="Pai G."/>
            <person name="Van Aken S."/>
            <person name="Umayam L."/>
            <person name="Tallon L.J."/>
            <person name="Gill J.E."/>
            <person name="Adams M.D."/>
            <person name="Carrera A.J."/>
            <person name="Creasy T.H."/>
            <person name="Goodman H.M."/>
            <person name="Somerville C.R."/>
            <person name="Copenhaver G.P."/>
            <person name="Preuss D."/>
            <person name="Nierman W.C."/>
            <person name="White O."/>
            <person name="Eisen J.A."/>
            <person name="Salzberg S.L."/>
            <person name="Fraser C.M."/>
            <person name="Venter J.C."/>
        </authorList>
    </citation>
    <scope>NUCLEOTIDE SEQUENCE [LARGE SCALE GENOMIC DNA]</scope>
    <source>
        <strain>cv. Columbia</strain>
    </source>
</reference>
<reference key="3">
    <citation type="journal article" date="2017" name="Plant J.">
        <title>Araport11: a complete reannotation of the Arabidopsis thaliana reference genome.</title>
        <authorList>
            <person name="Cheng C.Y."/>
            <person name="Krishnakumar V."/>
            <person name="Chan A.P."/>
            <person name="Thibaud-Nissen F."/>
            <person name="Schobel S."/>
            <person name="Town C.D."/>
        </authorList>
    </citation>
    <scope>GENOME REANNOTATION</scope>
    <source>
        <strain>cv. Columbia</strain>
    </source>
</reference>
<reference key="4">
    <citation type="journal article" date="2003" name="Science">
        <title>Empirical analysis of transcriptional activity in the Arabidopsis genome.</title>
        <authorList>
            <person name="Yamada K."/>
            <person name="Lim J."/>
            <person name="Dale J.M."/>
            <person name="Chen H."/>
            <person name="Shinn P."/>
            <person name="Palm C.J."/>
            <person name="Southwick A.M."/>
            <person name="Wu H.C."/>
            <person name="Kim C.J."/>
            <person name="Nguyen M."/>
            <person name="Pham P.K."/>
            <person name="Cheuk R.F."/>
            <person name="Karlin-Newmann G."/>
            <person name="Liu S.X."/>
            <person name="Lam B."/>
            <person name="Sakano H."/>
            <person name="Wu T."/>
            <person name="Yu G."/>
            <person name="Miranda M."/>
            <person name="Quach H.L."/>
            <person name="Tripp M."/>
            <person name="Chang C.H."/>
            <person name="Lee J.M."/>
            <person name="Toriumi M.J."/>
            <person name="Chan M.M."/>
            <person name="Tang C.C."/>
            <person name="Onodera C.S."/>
            <person name="Deng J.M."/>
            <person name="Akiyama K."/>
            <person name="Ansari Y."/>
            <person name="Arakawa T."/>
            <person name="Banh J."/>
            <person name="Banno F."/>
            <person name="Bowser L."/>
            <person name="Brooks S.Y."/>
            <person name="Carninci P."/>
            <person name="Chao Q."/>
            <person name="Choy N."/>
            <person name="Enju A."/>
            <person name="Goldsmith A.D."/>
            <person name="Gurjal M."/>
            <person name="Hansen N.F."/>
            <person name="Hayashizaki Y."/>
            <person name="Johnson-Hopson C."/>
            <person name="Hsuan V.W."/>
            <person name="Iida K."/>
            <person name="Karnes M."/>
            <person name="Khan S."/>
            <person name="Koesema E."/>
            <person name="Ishida J."/>
            <person name="Jiang P.X."/>
            <person name="Jones T."/>
            <person name="Kawai J."/>
            <person name="Kamiya A."/>
            <person name="Meyers C."/>
            <person name="Nakajima M."/>
            <person name="Narusaka M."/>
            <person name="Seki M."/>
            <person name="Sakurai T."/>
            <person name="Satou M."/>
            <person name="Tamse R."/>
            <person name="Vaysberg M."/>
            <person name="Wallender E.K."/>
            <person name="Wong C."/>
            <person name="Yamamura Y."/>
            <person name="Yuan S."/>
            <person name="Shinozaki K."/>
            <person name="Davis R.W."/>
            <person name="Theologis A."/>
            <person name="Ecker J.R."/>
        </authorList>
    </citation>
    <scope>NUCLEOTIDE SEQUENCE [LARGE SCALE MRNA]</scope>
    <source>
        <strain>cv. Columbia</strain>
    </source>
</reference>
<reference key="5">
    <citation type="journal article" date="2004" name="Chromosoma">
        <title>Dimethylation of histone H3 lysine 9 is a critical mark for DNA methylation and gene silencing in Arabidopsis thaliana.</title>
        <authorList>
            <person name="Jackson J.P."/>
            <person name="Johnson L."/>
            <person name="Jasencakova Z."/>
            <person name="Zhang X."/>
            <person name="PerezBurgos L."/>
            <person name="Singh P.B."/>
            <person name="Cheng X."/>
            <person name="Schubert I."/>
            <person name="Jenuwein T."/>
            <person name="Jacobsen S.E."/>
        </authorList>
    </citation>
    <scope>FUNCTION</scope>
    <scope>CATALYTIC ACTIVITY</scope>
</reference>
<reference key="6">
    <citation type="journal article" date="2005" name="Mol. Cell. Biol.">
        <title>H3 lysine 9 methylation is maintained on a transcribed inverted repeat by combined action of SUVH6 and SUVH4 methyltransferases.</title>
        <authorList>
            <person name="Ebbs M.L."/>
            <person name="Bartee L."/>
            <person name="Bender J."/>
        </authorList>
    </citation>
    <scope>FUNCTION</scope>
    <scope>CATALYTIC ACTIVITY</scope>
</reference>
<reference key="7">
    <citation type="journal article" date="2006" name="J. Plant Physiol.">
        <title>Heterochromatin proteins and the control of heterochromatic gene silencing in Arabidopsis.</title>
        <authorList>
            <person name="Fischer A."/>
            <person name="Hofmann I."/>
            <person name="Naumann K."/>
            <person name="Reuter G."/>
        </authorList>
    </citation>
    <scope>GENE FAMILY</scope>
</reference>
<accession>Q8VZ17</accession>
<accession>Q9C5P2</accession>
<accession>Q9ZQ40</accession>
<protein>
    <recommendedName>
        <fullName>Histone-lysine N-methyltransferase, H3 lysine-9 specific SUVH6</fullName>
        <ecNumber evidence="11 12">2.1.1.-</ecNumber>
        <ecNumber evidence="11 12">2.1.1.367</ecNumber>
    </recommendedName>
    <alternativeName>
        <fullName>Histone H3-K9 methyltransferase 6</fullName>
        <shortName>H3-K9-HMTase 6</shortName>
    </alternativeName>
    <alternativeName>
        <fullName>Protein SET DOMAIN GROUP 23</fullName>
    </alternativeName>
    <alternativeName>
        <fullName>Suppressor of variegation 3-9 homolog protein 6</fullName>
        <shortName>Su(var)3-9 homolog protein 6</shortName>
    </alternativeName>
</protein>
<evidence type="ECO:0000250" key="1"/>
<evidence type="ECO:0000255" key="2">
    <source>
        <dbReference type="PROSITE-ProRule" id="PRU00155"/>
    </source>
</evidence>
<evidence type="ECO:0000255" key="3">
    <source>
        <dbReference type="PROSITE-ProRule" id="PRU00157"/>
    </source>
</evidence>
<evidence type="ECO:0000255" key="4">
    <source>
        <dbReference type="PROSITE-ProRule" id="PRU00190"/>
    </source>
</evidence>
<evidence type="ECO:0000255" key="5">
    <source>
        <dbReference type="PROSITE-ProRule" id="PRU00358"/>
    </source>
</evidence>
<evidence type="ECO:0000255" key="6">
    <source>
        <dbReference type="PROSITE-ProRule" id="PRU00908"/>
    </source>
</evidence>
<evidence type="ECO:0000256" key="7">
    <source>
        <dbReference type="SAM" id="MobiDB-lite"/>
    </source>
</evidence>
<evidence type="ECO:0000269" key="8">
    <source>
    </source>
</evidence>
<evidence type="ECO:0000269" key="9">
    <source>
    </source>
</evidence>
<evidence type="ECO:0000305" key="10"/>
<evidence type="ECO:0000305" key="11">
    <source>
    </source>
</evidence>
<evidence type="ECO:0000305" key="12">
    <source>
    </source>
</evidence>
<evidence type="ECO:0007829" key="13">
    <source>
        <dbReference type="PDB" id="6A5K"/>
    </source>
</evidence>
<evidence type="ECO:0007829" key="14">
    <source>
        <dbReference type="PDB" id="6A5M"/>
    </source>
</evidence>
<evidence type="ECO:0007829" key="15">
    <source>
        <dbReference type="PDB" id="6A5N"/>
    </source>
</evidence>
<comment type="function">
    <text evidence="8 9">Histone methyltransferase. Methylates 'Lys-9' of histone H3. H3 'Lys-9' methylation represents a specific tag for epigenetic transcriptional repression. Seems to act preferentially on dsMRNA.</text>
</comment>
<comment type="catalytic activity">
    <reaction evidence="11 12">
        <text>N(6)-methyl-L-lysyl(9)-[histone H3] + S-adenosyl-L-methionine = N(6),N(6)-dimethyl-L-lysyl(9)-[histone H3] + S-adenosyl-L-homocysteine + H(+)</text>
        <dbReference type="Rhea" id="RHEA:60284"/>
        <dbReference type="Rhea" id="RHEA-COMP:15541"/>
        <dbReference type="Rhea" id="RHEA-COMP:15542"/>
        <dbReference type="ChEBI" id="CHEBI:15378"/>
        <dbReference type="ChEBI" id="CHEBI:57856"/>
        <dbReference type="ChEBI" id="CHEBI:59789"/>
        <dbReference type="ChEBI" id="CHEBI:61929"/>
        <dbReference type="ChEBI" id="CHEBI:61976"/>
    </reaction>
</comment>
<comment type="catalytic activity">
    <reaction evidence="11 12">
        <text>L-lysyl(9)-[histone H3] + S-adenosyl-L-methionine = N(6)-methyl-L-lysyl(9)-[histone H3] + S-adenosyl-L-homocysteine + H(+)</text>
        <dbReference type="Rhea" id="RHEA:60280"/>
        <dbReference type="Rhea" id="RHEA-COMP:15542"/>
        <dbReference type="Rhea" id="RHEA-COMP:15546"/>
        <dbReference type="ChEBI" id="CHEBI:15378"/>
        <dbReference type="ChEBI" id="CHEBI:29969"/>
        <dbReference type="ChEBI" id="CHEBI:57856"/>
        <dbReference type="ChEBI" id="CHEBI:59789"/>
        <dbReference type="ChEBI" id="CHEBI:61929"/>
        <dbReference type="EC" id="2.1.1.367"/>
    </reaction>
</comment>
<comment type="interaction">
    <interactant intactId="EBI-15193239">
        <id>Q8VZ17</id>
    </interactant>
    <interactant intactId="EBI-15192335">
        <id>C0SUW7</id>
        <label>ARID6</label>
    </interactant>
    <organismsDiffer>false</organismsDiffer>
    <experiments>3</experiments>
</comment>
<comment type="subcellular location">
    <subcellularLocation>
        <location evidence="5">Nucleus</location>
    </subcellularLocation>
    <subcellularLocation>
        <location evidence="1">Chromosome</location>
        <location evidence="1">Centromere</location>
    </subcellularLocation>
    <text evidence="1">Associates with centromeric constitutive heterochromatin.</text>
</comment>
<comment type="domain">
    <text>Although the SET domain contains the active site of enzymatic activity, both pre-SET and post-SET domains are required for methyltransferase activity.</text>
</comment>
<comment type="domain">
    <text evidence="1">In the pre-SET domain, Cys residues bind 3 zinc ions that are arranged in a triangular cluster; some of these Cys residues contribute to the binding of two zinc ions within the cluster.</text>
</comment>
<comment type="similarity">
    <text evidence="6">Belongs to the class V-like SAM-binding methyltransferase superfamily. Histone-lysine methyltransferase family. Suvar3-9 subfamily.</text>
</comment>
<comment type="sequence caution" evidence="10">
    <conflict type="erroneous initiation">
        <sequence resource="EMBL-CDS" id="AAD15582"/>
    </conflict>
</comment>
<organism>
    <name type="scientific">Arabidopsis thaliana</name>
    <name type="common">Mouse-ear cress</name>
    <dbReference type="NCBI Taxonomy" id="3702"/>
    <lineage>
        <taxon>Eukaryota</taxon>
        <taxon>Viridiplantae</taxon>
        <taxon>Streptophyta</taxon>
        <taxon>Embryophyta</taxon>
        <taxon>Tracheophyta</taxon>
        <taxon>Spermatophyta</taxon>
        <taxon>Magnoliopsida</taxon>
        <taxon>eudicotyledons</taxon>
        <taxon>Gunneridae</taxon>
        <taxon>Pentapetalae</taxon>
        <taxon>rosids</taxon>
        <taxon>malvids</taxon>
        <taxon>Brassicales</taxon>
        <taxon>Brassicaceae</taxon>
        <taxon>Camelineae</taxon>
        <taxon>Arabidopsis</taxon>
    </lineage>
</organism>